<accession>A2REH9</accession>
<protein>
    <recommendedName>
        <fullName evidence="1">Peptide chain release factor 1</fullName>
        <shortName evidence="1">RF-1</shortName>
    </recommendedName>
</protein>
<reference key="1">
    <citation type="journal article" date="2007" name="J. Bacteriol.">
        <title>Complete genome of acute rheumatic fever-associated serotype M5 Streptococcus pyogenes strain Manfredo.</title>
        <authorList>
            <person name="Holden M.T.G."/>
            <person name="Scott A."/>
            <person name="Cherevach I."/>
            <person name="Chillingworth T."/>
            <person name="Churcher C."/>
            <person name="Cronin A."/>
            <person name="Dowd L."/>
            <person name="Feltwell T."/>
            <person name="Hamlin N."/>
            <person name="Holroyd S."/>
            <person name="Jagels K."/>
            <person name="Moule S."/>
            <person name="Mungall K."/>
            <person name="Quail M.A."/>
            <person name="Price C."/>
            <person name="Rabbinowitsch E."/>
            <person name="Sharp S."/>
            <person name="Skelton J."/>
            <person name="Whitehead S."/>
            <person name="Barrell B.G."/>
            <person name="Kehoe M."/>
            <person name="Parkhill J."/>
        </authorList>
    </citation>
    <scope>NUCLEOTIDE SEQUENCE [LARGE SCALE GENOMIC DNA]</scope>
    <source>
        <strain>Manfredo</strain>
    </source>
</reference>
<feature type="chain" id="PRO_1000004958" description="Peptide chain release factor 1">
    <location>
        <begin position="1"/>
        <end position="359"/>
    </location>
</feature>
<feature type="modified residue" description="N5-methylglutamine" evidence="1">
    <location>
        <position position="236"/>
    </location>
</feature>
<keyword id="KW-0963">Cytoplasm</keyword>
<keyword id="KW-0488">Methylation</keyword>
<keyword id="KW-0648">Protein biosynthesis</keyword>
<sequence length="359" mass="40600">MNIYDQLQAVEDRYEELGELLSDPDVVSDTKRFMELSREEANTRETVTAYREYKQVIQTISDAEEMIKDASGDPELEEMAKEELKESKAAKEEYEEKLKILLLPKDPNDDKNIILEIRGAAGGDEAALFAGDLLTMYQKYAETQGWRFEVMESSVNGVGGIKEVVAMVSGQSVYSKLKYESGAHRVQRVPVTESQGRVHTSTATVLVMPEVEEVEYDIDQKDLRVDIYHASGAGGQNVNKVATAVRMVHIPTGIKVEMQEERTQQKNRDKAMKIIRARVADHFAQIAQDEQDAERKSTVGTGDRSERIRTYNFPQNRVTDHRIGLTLQKLDTILSGKMDEVIDALVMYDQTKKLESLNN</sequence>
<organism>
    <name type="scientific">Streptococcus pyogenes serotype M5 (strain Manfredo)</name>
    <dbReference type="NCBI Taxonomy" id="160491"/>
    <lineage>
        <taxon>Bacteria</taxon>
        <taxon>Bacillati</taxon>
        <taxon>Bacillota</taxon>
        <taxon>Bacilli</taxon>
        <taxon>Lactobacillales</taxon>
        <taxon>Streptococcaceae</taxon>
        <taxon>Streptococcus</taxon>
    </lineage>
</organism>
<gene>
    <name evidence="1" type="primary">prfA</name>
    <name type="ordered locus">SpyM50927</name>
</gene>
<comment type="function">
    <text evidence="1">Peptide chain release factor 1 directs the termination of translation in response to the peptide chain termination codons UAG and UAA.</text>
</comment>
<comment type="subcellular location">
    <subcellularLocation>
        <location evidence="1">Cytoplasm</location>
    </subcellularLocation>
</comment>
<comment type="PTM">
    <text evidence="1">Methylated by PrmC. Methylation increases the termination efficiency of RF1.</text>
</comment>
<comment type="similarity">
    <text evidence="1">Belongs to the prokaryotic/mitochondrial release factor family.</text>
</comment>
<evidence type="ECO:0000255" key="1">
    <source>
        <dbReference type="HAMAP-Rule" id="MF_00093"/>
    </source>
</evidence>
<proteinExistence type="inferred from homology"/>
<name>RF1_STRPG</name>
<dbReference type="EMBL" id="AM295007">
    <property type="protein sequence ID" value="CAM30254.1"/>
    <property type="molecule type" value="Genomic_DNA"/>
</dbReference>
<dbReference type="RefSeq" id="WP_002989800.1">
    <property type="nucleotide sequence ID" value="NC_009332.1"/>
</dbReference>
<dbReference type="SMR" id="A2REH9"/>
<dbReference type="KEGG" id="spf:SpyM50927"/>
<dbReference type="HOGENOM" id="CLU_036856_0_1_9"/>
<dbReference type="GO" id="GO:0005737">
    <property type="term" value="C:cytoplasm"/>
    <property type="evidence" value="ECO:0007669"/>
    <property type="project" value="UniProtKB-SubCell"/>
</dbReference>
<dbReference type="GO" id="GO:0016149">
    <property type="term" value="F:translation release factor activity, codon specific"/>
    <property type="evidence" value="ECO:0007669"/>
    <property type="project" value="UniProtKB-UniRule"/>
</dbReference>
<dbReference type="FunFam" id="3.30.160.20:FF:000027">
    <property type="entry name" value="Peptide chain release factor 1"/>
    <property type="match status" value="1"/>
</dbReference>
<dbReference type="FunFam" id="3.30.70.1660:FF:000002">
    <property type="entry name" value="Peptide chain release factor 1"/>
    <property type="match status" value="1"/>
</dbReference>
<dbReference type="FunFam" id="3.30.70.1660:FF:000004">
    <property type="entry name" value="Peptide chain release factor 1"/>
    <property type="match status" value="1"/>
</dbReference>
<dbReference type="Gene3D" id="3.30.160.20">
    <property type="match status" value="1"/>
</dbReference>
<dbReference type="Gene3D" id="3.30.70.1660">
    <property type="match status" value="2"/>
</dbReference>
<dbReference type="Gene3D" id="6.10.140.1950">
    <property type="match status" value="1"/>
</dbReference>
<dbReference type="HAMAP" id="MF_00093">
    <property type="entry name" value="Rel_fac_1"/>
    <property type="match status" value="1"/>
</dbReference>
<dbReference type="InterPro" id="IPR005139">
    <property type="entry name" value="PCRF"/>
</dbReference>
<dbReference type="InterPro" id="IPR000352">
    <property type="entry name" value="Pep_chain_release_fac_I"/>
</dbReference>
<dbReference type="InterPro" id="IPR045853">
    <property type="entry name" value="Pep_chain_release_fac_I_sf"/>
</dbReference>
<dbReference type="InterPro" id="IPR050057">
    <property type="entry name" value="Prokaryotic/Mito_RF"/>
</dbReference>
<dbReference type="InterPro" id="IPR004373">
    <property type="entry name" value="RF-1"/>
</dbReference>
<dbReference type="NCBIfam" id="TIGR00019">
    <property type="entry name" value="prfA"/>
    <property type="match status" value="1"/>
</dbReference>
<dbReference type="NCBIfam" id="NF001859">
    <property type="entry name" value="PRK00591.1"/>
    <property type="match status" value="1"/>
</dbReference>
<dbReference type="PANTHER" id="PTHR43804">
    <property type="entry name" value="LD18447P"/>
    <property type="match status" value="1"/>
</dbReference>
<dbReference type="PANTHER" id="PTHR43804:SF7">
    <property type="entry name" value="LD18447P"/>
    <property type="match status" value="1"/>
</dbReference>
<dbReference type="Pfam" id="PF03462">
    <property type="entry name" value="PCRF"/>
    <property type="match status" value="1"/>
</dbReference>
<dbReference type="Pfam" id="PF00472">
    <property type="entry name" value="RF-1"/>
    <property type="match status" value="1"/>
</dbReference>
<dbReference type="SMART" id="SM00937">
    <property type="entry name" value="PCRF"/>
    <property type="match status" value="1"/>
</dbReference>
<dbReference type="SUPFAM" id="SSF75620">
    <property type="entry name" value="Release factor"/>
    <property type="match status" value="1"/>
</dbReference>
<dbReference type="PROSITE" id="PS00745">
    <property type="entry name" value="RF_PROK_I"/>
    <property type="match status" value="1"/>
</dbReference>